<feature type="chain" id="PRO_1000165079" description="HPr kinase/phosphorylase">
    <location>
        <begin position="1"/>
        <end position="311"/>
    </location>
</feature>
<feature type="region of interest" description="Important for the catalytic mechanism of both phosphorylation and dephosphorylation" evidence="1">
    <location>
        <begin position="201"/>
        <end position="210"/>
    </location>
</feature>
<feature type="region of interest" description="Important for the catalytic mechanism of dephosphorylation" evidence="1">
    <location>
        <begin position="264"/>
        <end position="269"/>
    </location>
</feature>
<feature type="active site" evidence="1">
    <location>
        <position position="138"/>
    </location>
</feature>
<feature type="active site" evidence="1">
    <location>
        <position position="159"/>
    </location>
</feature>
<feature type="active site" description="Proton acceptor; for phosphorylation activity. Proton donor; for dephosphorylation activity" evidence="1">
    <location>
        <position position="177"/>
    </location>
</feature>
<feature type="active site" evidence="1">
    <location>
        <position position="243"/>
    </location>
</feature>
<feature type="binding site" evidence="1">
    <location>
        <begin position="153"/>
        <end position="160"/>
    </location>
    <ligand>
        <name>ATP</name>
        <dbReference type="ChEBI" id="CHEBI:30616"/>
    </ligand>
</feature>
<feature type="binding site" evidence="1">
    <location>
        <position position="160"/>
    </location>
    <ligand>
        <name>Mg(2+)</name>
        <dbReference type="ChEBI" id="CHEBI:18420"/>
    </ligand>
</feature>
<feature type="binding site" evidence="1">
    <location>
        <position position="202"/>
    </location>
    <ligand>
        <name>Mg(2+)</name>
        <dbReference type="ChEBI" id="CHEBI:18420"/>
    </ligand>
</feature>
<accession>C1CF01</accession>
<proteinExistence type="inferred from homology"/>
<organism>
    <name type="scientific">Streptococcus pneumoniae (strain JJA)</name>
    <dbReference type="NCBI Taxonomy" id="488222"/>
    <lineage>
        <taxon>Bacteria</taxon>
        <taxon>Bacillati</taxon>
        <taxon>Bacillota</taxon>
        <taxon>Bacilli</taxon>
        <taxon>Lactobacillales</taxon>
        <taxon>Streptococcaceae</taxon>
        <taxon>Streptococcus</taxon>
    </lineage>
</organism>
<name>HPRK_STRZJ</name>
<sequence>MSVLVKEVIEKLRLDIVYGEPELLEKEINTADITRPGLEMTGYFDYYTPERIQLLGMKEWSYLISMPSNSRYEVLKKMFLPETPAVIVARGLVVPEEMLKAARECKIAILTSRAATSRLSGELSSYLDSRLAERTSVHGVLMDIYGMGVLIQGDSGIGKSETGLELVKRGHRLVADDRVDIFAKDEITLWGEPAEILKHLIEIRGVGIIDVMSLYGASAVKDSSQVQLAVYLENYDTHKTFDRLGNNAEELEVSGVAIPRIRIPVKTGRNISVVIEAAAMNYRAKEMGFDATRLFDERLTSLIARNEVQNA</sequence>
<gene>
    <name evidence="1" type="primary">hprK</name>
    <name type="ordered locus">SPJ_1312</name>
</gene>
<dbReference type="EC" id="2.7.11.-" evidence="1"/>
<dbReference type="EC" id="2.7.4.-" evidence="1"/>
<dbReference type="EMBL" id="CP000919">
    <property type="protein sequence ID" value="ACO19068.1"/>
    <property type="molecule type" value="Genomic_DNA"/>
</dbReference>
<dbReference type="RefSeq" id="WP_000115143.1">
    <property type="nucleotide sequence ID" value="NC_012466.1"/>
</dbReference>
<dbReference type="SMR" id="C1CF01"/>
<dbReference type="KEGG" id="sjj:SPJ_1312"/>
<dbReference type="HOGENOM" id="CLU_052030_0_1_9"/>
<dbReference type="Proteomes" id="UP000002206">
    <property type="component" value="Chromosome"/>
</dbReference>
<dbReference type="GO" id="GO:0005524">
    <property type="term" value="F:ATP binding"/>
    <property type="evidence" value="ECO:0007669"/>
    <property type="project" value="UniProtKB-UniRule"/>
</dbReference>
<dbReference type="GO" id="GO:0000287">
    <property type="term" value="F:magnesium ion binding"/>
    <property type="evidence" value="ECO:0007669"/>
    <property type="project" value="UniProtKB-UniRule"/>
</dbReference>
<dbReference type="GO" id="GO:0000155">
    <property type="term" value="F:phosphorelay sensor kinase activity"/>
    <property type="evidence" value="ECO:0007669"/>
    <property type="project" value="InterPro"/>
</dbReference>
<dbReference type="GO" id="GO:0004674">
    <property type="term" value="F:protein serine/threonine kinase activity"/>
    <property type="evidence" value="ECO:0007669"/>
    <property type="project" value="UniProtKB-KW"/>
</dbReference>
<dbReference type="GO" id="GO:0004712">
    <property type="term" value="F:protein serine/threonine/tyrosine kinase activity"/>
    <property type="evidence" value="ECO:0007669"/>
    <property type="project" value="UniProtKB-UniRule"/>
</dbReference>
<dbReference type="GO" id="GO:0006109">
    <property type="term" value="P:regulation of carbohydrate metabolic process"/>
    <property type="evidence" value="ECO:0007669"/>
    <property type="project" value="UniProtKB-UniRule"/>
</dbReference>
<dbReference type="CDD" id="cd01918">
    <property type="entry name" value="HprK_C"/>
    <property type="match status" value="1"/>
</dbReference>
<dbReference type="FunFam" id="3.40.1390.20:FF:000005">
    <property type="entry name" value="HPr kinase/phosphorylase"/>
    <property type="match status" value="1"/>
</dbReference>
<dbReference type="FunFam" id="3.40.50.300:FF:000174">
    <property type="entry name" value="HPr kinase/phosphorylase"/>
    <property type="match status" value="1"/>
</dbReference>
<dbReference type="Gene3D" id="3.40.1390.20">
    <property type="entry name" value="HprK N-terminal domain-like"/>
    <property type="match status" value="1"/>
</dbReference>
<dbReference type="Gene3D" id="3.40.50.300">
    <property type="entry name" value="P-loop containing nucleotide triphosphate hydrolases"/>
    <property type="match status" value="1"/>
</dbReference>
<dbReference type="HAMAP" id="MF_01249">
    <property type="entry name" value="HPr_kinase"/>
    <property type="match status" value="1"/>
</dbReference>
<dbReference type="InterPro" id="IPR003755">
    <property type="entry name" value="HPr(Ser)_kin/Pase"/>
</dbReference>
<dbReference type="InterPro" id="IPR011104">
    <property type="entry name" value="Hpr_kin/Pase_C"/>
</dbReference>
<dbReference type="InterPro" id="IPR011126">
    <property type="entry name" value="Hpr_kin/Pase_Hpr_N"/>
</dbReference>
<dbReference type="InterPro" id="IPR027417">
    <property type="entry name" value="P-loop_NTPase"/>
</dbReference>
<dbReference type="InterPro" id="IPR028979">
    <property type="entry name" value="Ser_kin/Pase_Hpr-like_N_sf"/>
</dbReference>
<dbReference type="NCBIfam" id="TIGR00679">
    <property type="entry name" value="hpr-ser"/>
    <property type="match status" value="1"/>
</dbReference>
<dbReference type="PANTHER" id="PTHR30305:SF1">
    <property type="entry name" value="HPR KINASE_PHOSPHORYLASE"/>
    <property type="match status" value="1"/>
</dbReference>
<dbReference type="PANTHER" id="PTHR30305">
    <property type="entry name" value="PROTEIN YJDM-RELATED"/>
    <property type="match status" value="1"/>
</dbReference>
<dbReference type="Pfam" id="PF07475">
    <property type="entry name" value="Hpr_kinase_C"/>
    <property type="match status" value="1"/>
</dbReference>
<dbReference type="Pfam" id="PF02603">
    <property type="entry name" value="Hpr_kinase_N"/>
    <property type="match status" value="1"/>
</dbReference>
<dbReference type="SUPFAM" id="SSF75138">
    <property type="entry name" value="HprK N-terminal domain-like"/>
    <property type="match status" value="1"/>
</dbReference>
<dbReference type="SUPFAM" id="SSF53795">
    <property type="entry name" value="PEP carboxykinase-like"/>
    <property type="match status" value="1"/>
</dbReference>
<evidence type="ECO:0000255" key="1">
    <source>
        <dbReference type="HAMAP-Rule" id="MF_01249"/>
    </source>
</evidence>
<keyword id="KW-0067">ATP-binding</keyword>
<keyword id="KW-0119">Carbohydrate metabolism</keyword>
<keyword id="KW-0418">Kinase</keyword>
<keyword id="KW-0460">Magnesium</keyword>
<keyword id="KW-0479">Metal-binding</keyword>
<keyword id="KW-0511">Multifunctional enzyme</keyword>
<keyword id="KW-0547">Nucleotide-binding</keyword>
<keyword id="KW-0723">Serine/threonine-protein kinase</keyword>
<keyword id="KW-0808">Transferase</keyword>
<protein>
    <recommendedName>
        <fullName evidence="1">HPr kinase/phosphorylase</fullName>
        <shortName evidence="1">HPrK/P</shortName>
        <ecNumber evidence="1">2.7.11.-</ecNumber>
        <ecNumber evidence="1">2.7.4.-</ecNumber>
    </recommendedName>
    <alternativeName>
        <fullName evidence="1">HPr(Ser) kinase/phosphorylase</fullName>
    </alternativeName>
</protein>
<reference key="1">
    <citation type="journal article" date="2010" name="Genome Biol.">
        <title>Structure and dynamics of the pan-genome of Streptococcus pneumoniae and closely related species.</title>
        <authorList>
            <person name="Donati C."/>
            <person name="Hiller N.L."/>
            <person name="Tettelin H."/>
            <person name="Muzzi A."/>
            <person name="Croucher N.J."/>
            <person name="Angiuoli S.V."/>
            <person name="Oggioni M."/>
            <person name="Dunning Hotopp J.C."/>
            <person name="Hu F.Z."/>
            <person name="Riley D.R."/>
            <person name="Covacci A."/>
            <person name="Mitchell T.J."/>
            <person name="Bentley S.D."/>
            <person name="Kilian M."/>
            <person name="Ehrlich G.D."/>
            <person name="Rappuoli R."/>
            <person name="Moxon E.R."/>
            <person name="Masignani V."/>
        </authorList>
    </citation>
    <scope>NUCLEOTIDE SEQUENCE [LARGE SCALE GENOMIC DNA]</scope>
    <source>
        <strain>JJA</strain>
    </source>
</reference>
<comment type="function">
    <text evidence="1">Catalyzes the ATP- as well as the pyrophosphate-dependent phosphorylation of a specific serine residue in HPr, a phosphocarrier protein of the phosphoenolpyruvate-dependent sugar phosphotransferase system (PTS). HprK/P also catalyzes the pyrophosphate-producing, inorganic phosphate-dependent dephosphorylation (phosphorolysis) of seryl-phosphorylated HPr (P-Ser-HPr). The two antagonistic activities of HprK/P are regulated by several intracellular metabolites, which change their concentration in response to the absence or presence of rapidly metabolisable carbon sources (glucose, fructose, etc.) in the growth medium. Therefore, by controlling the phosphorylation state of HPr, HPrK/P is a sensor enzyme that plays a major role in the regulation of carbon metabolism and sugar transport: it mediates carbon catabolite repression (CCR), and regulates PTS-catalyzed carbohydrate uptake and inducer exclusion.</text>
</comment>
<comment type="catalytic activity">
    <reaction evidence="1">
        <text>[HPr protein]-L-serine + ATP = [HPr protein]-O-phospho-L-serine + ADP + H(+)</text>
        <dbReference type="Rhea" id="RHEA:46600"/>
        <dbReference type="Rhea" id="RHEA-COMP:11602"/>
        <dbReference type="Rhea" id="RHEA-COMP:11603"/>
        <dbReference type="ChEBI" id="CHEBI:15378"/>
        <dbReference type="ChEBI" id="CHEBI:29999"/>
        <dbReference type="ChEBI" id="CHEBI:30616"/>
        <dbReference type="ChEBI" id="CHEBI:83421"/>
        <dbReference type="ChEBI" id="CHEBI:456216"/>
    </reaction>
</comment>
<comment type="catalytic activity">
    <reaction evidence="1">
        <text>[HPr protein]-O-phospho-L-serine + phosphate + H(+) = [HPr protein]-L-serine + diphosphate</text>
        <dbReference type="Rhea" id="RHEA:46604"/>
        <dbReference type="Rhea" id="RHEA-COMP:11602"/>
        <dbReference type="Rhea" id="RHEA-COMP:11603"/>
        <dbReference type="ChEBI" id="CHEBI:15378"/>
        <dbReference type="ChEBI" id="CHEBI:29999"/>
        <dbReference type="ChEBI" id="CHEBI:33019"/>
        <dbReference type="ChEBI" id="CHEBI:43474"/>
        <dbReference type="ChEBI" id="CHEBI:83421"/>
    </reaction>
</comment>
<comment type="cofactor">
    <cofactor evidence="1">
        <name>Mg(2+)</name>
        <dbReference type="ChEBI" id="CHEBI:18420"/>
    </cofactor>
</comment>
<comment type="subunit">
    <text evidence="1">Homohexamer.</text>
</comment>
<comment type="domain">
    <text evidence="1">The Walker A ATP-binding motif also binds Pi and PPi.</text>
</comment>
<comment type="miscellaneous">
    <text evidence="1">Both phosphorylation and phosphorolysis are carried out by the same active site and suggest a common mechanism for both reactions.</text>
</comment>
<comment type="similarity">
    <text evidence="1">Belongs to the HPrK/P family.</text>
</comment>